<keyword id="KW-0131">Cell cycle</keyword>
<keyword id="KW-0132">Cell division</keyword>
<keyword id="KW-1003">Cell membrane</keyword>
<keyword id="KW-0963">Cytoplasm</keyword>
<keyword id="KW-0206">Cytoskeleton</keyword>
<keyword id="KW-0342">GTP-binding</keyword>
<keyword id="KW-0378">Hydrolase</keyword>
<keyword id="KW-0449">Lipoprotein</keyword>
<keyword id="KW-0460">Magnesium</keyword>
<keyword id="KW-0472">Membrane</keyword>
<keyword id="KW-0479">Metal-binding</keyword>
<keyword id="KW-0498">Mitosis</keyword>
<keyword id="KW-0519">Myristate</keyword>
<keyword id="KW-0547">Nucleotide-binding</keyword>
<keyword id="KW-0539">Nucleus</keyword>
<keyword id="KW-0564">Palmitate</keyword>
<keyword id="KW-1185">Reference proteome</keyword>
<keyword id="KW-0807">Transducer</keyword>
<keyword id="KW-0813">Transport</keyword>
<feature type="initiator methionine" description="Removed" evidence="2">
    <location>
        <position position="1"/>
    </location>
</feature>
<feature type="chain" id="PRO_0000203670" description="Guanine nucleotide-binding protein G(i) subunit alpha-1">
    <location>
        <begin position="2"/>
        <end position="354"/>
    </location>
</feature>
<feature type="domain" description="G-alpha" evidence="3">
    <location>
        <begin position="32"/>
        <end position="354"/>
    </location>
</feature>
<feature type="region of interest" description="G1 motif" evidence="3">
    <location>
        <begin position="35"/>
        <end position="48"/>
    </location>
</feature>
<feature type="region of interest" description="G2 motif" evidence="3">
    <location>
        <begin position="173"/>
        <end position="181"/>
    </location>
</feature>
<feature type="region of interest" description="G3 motif" evidence="3">
    <location>
        <begin position="196"/>
        <end position="205"/>
    </location>
</feature>
<feature type="region of interest" description="G4 motif" evidence="3">
    <location>
        <begin position="265"/>
        <end position="272"/>
    </location>
</feature>
<feature type="region of interest" description="G5 motif" evidence="3">
    <location>
        <begin position="324"/>
        <end position="329"/>
    </location>
</feature>
<feature type="binding site" evidence="1">
    <location>
        <begin position="43"/>
        <end position="48"/>
    </location>
    <ligand>
        <name>GTP</name>
        <dbReference type="ChEBI" id="CHEBI:37565"/>
    </ligand>
</feature>
<feature type="binding site" evidence="1">
    <location>
        <position position="47"/>
    </location>
    <ligand>
        <name>Mg(2+)</name>
        <dbReference type="ChEBI" id="CHEBI:18420"/>
    </ligand>
</feature>
<feature type="binding site" evidence="1">
    <location>
        <begin position="150"/>
        <end position="151"/>
    </location>
    <ligand>
        <name>GTP</name>
        <dbReference type="ChEBI" id="CHEBI:37565"/>
    </ligand>
</feature>
<feature type="binding site" evidence="1">
    <location>
        <begin position="175"/>
        <end position="178"/>
    </location>
    <ligand>
        <name>GTP</name>
        <dbReference type="ChEBI" id="CHEBI:37565"/>
    </ligand>
</feature>
<feature type="binding site" evidence="1">
    <location>
        <position position="181"/>
    </location>
    <ligand>
        <name>Mg(2+)</name>
        <dbReference type="ChEBI" id="CHEBI:18420"/>
    </ligand>
</feature>
<feature type="binding site" evidence="1">
    <location>
        <begin position="200"/>
        <end position="204"/>
    </location>
    <ligand>
        <name>GTP</name>
        <dbReference type="ChEBI" id="CHEBI:37565"/>
    </ligand>
</feature>
<feature type="binding site" evidence="1">
    <location>
        <begin position="269"/>
        <end position="272"/>
    </location>
    <ligand>
        <name>GTP</name>
        <dbReference type="ChEBI" id="CHEBI:37565"/>
    </ligand>
</feature>
<feature type="binding site" evidence="1">
    <location>
        <position position="326"/>
    </location>
    <ligand>
        <name>GTP</name>
        <dbReference type="ChEBI" id="CHEBI:37565"/>
    </ligand>
</feature>
<feature type="lipid moiety-binding region" description="N-myristoyl glycine" evidence="2">
    <location>
        <position position="2"/>
    </location>
</feature>
<feature type="lipid moiety-binding region" description="S-palmitoyl cysteine" evidence="1">
    <location>
        <position position="3"/>
    </location>
</feature>
<reference key="1">
    <citation type="journal article" date="1992" name="Biochim. Biophys. Acta">
        <title>Three types of Gi alpha protein of the guinea-pig lung: cDNA cloning and analysis of their tissue distribution.</title>
        <authorList>
            <person name="Sakanaka C."/>
            <person name="Izumi T."/>
            <person name="Nakamura M."/>
            <person name="Honda Z."/>
            <person name="Watanabe T."/>
            <person name="Minami M."/>
            <person name="Mutoh H."/>
            <person name="Bito H."/>
            <person name="Seyama Y."/>
            <person name="Ui M."/>
            <person name="Shimizu T."/>
        </authorList>
    </citation>
    <scope>NUCLEOTIDE SEQUENCE [MRNA]</scope>
    <source>
        <strain>Hartley</strain>
        <tissue>Lung</tissue>
    </source>
</reference>
<accession>P38401</accession>
<protein>
    <recommendedName>
        <fullName>Guanine nucleotide-binding protein G(i) subunit alpha-1</fullName>
        <ecNumber evidence="2">3.6.5.-</ecNumber>
    </recommendedName>
    <alternativeName>
        <fullName>Adenylate cyclase-inhibiting G alpha protein</fullName>
    </alternativeName>
</protein>
<comment type="function">
    <text evidence="1 2">Guanine nucleotide-binding proteins (G proteins) function as transducers downstream of G protein-coupled receptors (GPCRs) in numerous signaling cascades. The alpha chain contains the guanine nucleotide binding site and alternates between an active, GTP-bound state and an inactive, GDP-bound state. Signaling by an activated GPCR promotes GDP release and GTP binding. The alpha subunit has a low GTPase activity that converts bound GTP to GDP, thereby terminating the signal. Both GDP release and GTP hydrolysis are modulated by numerous regulatory proteins (By similarity). Signaling is mediated via effector proteins, such as adenylate cyclase. Inhibits adenylate cyclase activity of ADCY1, ADCY5 and ADCY6, leading to decreased intracellular cAMP levels (By similarity). The inactive GDP-bound form prevents the association of RGS14 with centrosomes and is required for the translocation of RGS14 from the cytoplasm to the plasma membrane. Required for normal cytokinesis during mitosis (By similarity). Required for cortical dynein-dynactin complex recruitment during metaphase (By similarity).</text>
</comment>
<comment type="catalytic activity">
    <reaction evidence="2">
        <text>GTP + H2O = GDP + phosphate + H(+)</text>
        <dbReference type="Rhea" id="RHEA:19669"/>
        <dbReference type="ChEBI" id="CHEBI:15377"/>
        <dbReference type="ChEBI" id="CHEBI:15378"/>
        <dbReference type="ChEBI" id="CHEBI:37565"/>
        <dbReference type="ChEBI" id="CHEBI:43474"/>
        <dbReference type="ChEBI" id="CHEBI:58189"/>
    </reaction>
    <physiologicalReaction direction="left-to-right" evidence="2">
        <dbReference type="Rhea" id="RHEA:19670"/>
    </physiologicalReaction>
</comment>
<comment type="subunit">
    <text evidence="1 2">Heterotrimeric G proteins are composed of 3 units; alpha, beta and gamma. The alpha chain contains the guanine nucleotide binding site. Part of a spindle orientation complex at least composed of GNAI1, GPSM2 and NUMA1. Identified in complex with the beta subunit GNB1 and the gamma subunit GNG1. Identified in complex with the beta subunit GNB1 and the gamma subunit GNG2. Component of the TAS2R14-GNAI1 complex, consisting of TAS2R14, GNAI1, GNB1 and GNG2; within the complex interacts with TAS2R14; this complex plays a role in the perception of bitterness (By similarity). GTP binding causes dissociation of the heterotrimer, liberating the individual subunits so that they can interact with downstream effector proteins. Interacts (GDP-bound form) with GPSM1; this inhibits guanine nucleotide exchange and GTP binding. Interacts (GDP-bound form) with GPSM2 (via GoLoco domains); this inhibits guanine nucleotide exchange. Interacts with RGS10; this strongly enhances GTP hydrolysis. Interacts with RGS1 and RGS16; this strongly enhances GTPase activity. Interacts with RGS4. Interacts with RGS12. Interacts (via active GTP- or inactive GDP-bound forms) with RGS14 (via RGS and GoLoco domains). Interacts with RGS3, RGS6, RGS7, RGS8, RGS17, RGS18 and RGS20 (in vitro). Interacts (GDP-bound form) with RIC8A (via C-terminus); promoting GNAI1 folding and association with the plasma membrane. Interacts (inactive GDP-bound form) with NUCB1 (via GBA motif); the interaction leads to activation of GNAI1 (By similarity). Interacts (inactive GDP-bound form) with CCDC88C/DAPLE (via GBA motif); the interaction leads to activation of GNAI1 (By similarity). Interacts (inactive GDP-bound form) with CCDC8A/GIV (via GBA motif) (By similarity).</text>
</comment>
<comment type="subcellular location">
    <subcellularLocation>
        <location evidence="1">Nucleus</location>
    </subcellularLocation>
    <subcellularLocation>
        <location evidence="1">Cytoplasm</location>
    </subcellularLocation>
    <subcellularLocation>
        <location evidence="1">Cell membrane</location>
        <topology evidence="1">Peripheral membrane protein</topology>
        <orientation evidence="1">Cytoplasmic side</orientation>
    </subcellularLocation>
    <subcellularLocation>
        <location evidence="1">Cytoplasm</location>
        <location evidence="1">Cytoskeleton</location>
        <location evidence="1">Microtubule organizing center</location>
        <location evidence="1">Centrosome</location>
    </subcellularLocation>
    <subcellularLocation>
        <location evidence="2">Cytoplasm</location>
        <location evidence="2">Cell cortex</location>
    </subcellularLocation>
    <subcellularLocation>
        <location evidence="1">Membrane</location>
        <topology evidence="1">Lipid-anchor</topology>
    </subcellularLocation>
    <text evidence="1">Localizes in the centrosomes of interphase and mitotic cells, but not in centrosomes during cytokinesis. Detected at the cleavage furrow or the midbody. Localized at the plasma membrane throughout mitosis. Colocalizes with RIC8A and RGS14 at the plasma membrane.</text>
</comment>
<comment type="tissue specificity">
    <text>Mainly expressed in the brain, lung and kidney.</text>
</comment>
<comment type="PTM">
    <text evidence="1">Myristoylation at Gly-2 is required for membrane anchoring before palmitoylation.</text>
</comment>
<comment type="PTM">
    <text evidence="1">Palmitoylation at Cys-3 varies with membrane lipid composition.</text>
</comment>
<comment type="similarity">
    <text evidence="4">Belongs to the G-alpha family. G(i/o/t/z) subfamily.</text>
</comment>
<proteinExistence type="evidence at transcript level"/>
<sequence length="354" mass="40381">MGCTLSAEDKAAVERSKMIDRNLREDGEKAAREVKLLLLGAGESGKSTIVKQMKIIHEAGYSEEECKQYKAVVYSNTIQSIIAIIRAMGRLKIDFGDSARADDARQLFVLAGAAEEGFMTAELAGVIKRLWKDSGVQACFNRSREYQLNDSAAYYLNDLDRIAQSNYIPTQQDVLRTRVKTTGIVETHFTFKDLHFKMFDVGGQRSERKKWIHCFEGVTAIIFCVALSDYDLVLAEDEEMNRMHESMKLFDSICNNKWFTDTSIILFLNKKDLFEEKIKKSPLTICYPEYTGSNTYEEAAAYIQCQFEDLNKRKDTKEIYTHFTCATDTKNVQFVFDAVTDVIIKNNLKDCGLF</sequence>
<name>GNAI1_CAVPO</name>
<dbReference type="EC" id="3.6.5.-" evidence="2"/>
<dbReference type="EMBL" id="D21232">
    <property type="protein sequence ID" value="BAA04764.1"/>
    <property type="molecule type" value="mRNA"/>
</dbReference>
<dbReference type="PIR" id="S28157">
    <property type="entry name" value="S28157"/>
</dbReference>
<dbReference type="RefSeq" id="NP_001166424.1">
    <property type="nucleotide sequence ID" value="NM_001172953.1"/>
</dbReference>
<dbReference type="SMR" id="P38401"/>
<dbReference type="FunCoup" id="P38401">
    <property type="interactions" value="2072"/>
</dbReference>
<dbReference type="GeneID" id="100135528"/>
<dbReference type="KEGG" id="cpoc:100135528"/>
<dbReference type="CTD" id="2770"/>
<dbReference type="InParanoid" id="P38401"/>
<dbReference type="OrthoDB" id="5817230at2759"/>
<dbReference type="Proteomes" id="UP000005447">
    <property type="component" value="Unassembled WGS sequence"/>
</dbReference>
<dbReference type="GO" id="GO:0005938">
    <property type="term" value="C:cell cortex"/>
    <property type="evidence" value="ECO:0000250"/>
    <property type="project" value="UniProtKB"/>
</dbReference>
<dbReference type="GO" id="GO:0005813">
    <property type="term" value="C:centrosome"/>
    <property type="evidence" value="ECO:0000250"/>
    <property type="project" value="UniProtKB"/>
</dbReference>
<dbReference type="GO" id="GO:0005737">
    <property type="term" value="C:cytoplasm"/>
    <property type="evidence" value="ECO:0000250"/>
    <property type="project" value="UniProtKB"/>
</dbReference>
<dbReference type="GO" id="GO:0005834">
    <property type="term" value="C:heterotrimeric G-protein complex"/>
    <property type="evidence" value="ECO:0007669"/>
    <property type="project" value="TreeGrafter"/>
</dbReference>
<dbReference type="GO" id="GO:0030496">
    <property type="term" value="C:midbody"/>
    <property type="evidence" value="ECO:0000250"/>
    <property type="project" value="UniProtKB"/>
</dbReference>
<dbReference type="GO" id="GO:0005634">
    <property type="term" value="C:nucleus"/>
    <property type="evidence" value="ECO:0007669"/>
    <property type="project" value="UniProtKB-SubCell"/>
</dbReference>
<dbReference type="GO" id="GO:0005886">
    <property type="term" value="C:plasma membrane"/>
    <property type="evidence" value="ECO:0000250"/>
    <property type="project" value="UniProtKB"/>
</dbReference>
<dbReference type="GO" id="GO:0001664">
    <property type="term" value="F:G protein-coupled receptor binding"/>
    <property type="evidence" value="ECO:0000250"/>
    <property type="project" value="UniProtKB"/>
</dbReference>
<dbReference type="GO" id="GO:0031683">
    <property type="term" value="F:G-protein beta/gamma-subunit complex binding"/>
    <property type="evidence" value="ECO:0007669"/>
    <property type="project" value="InterPro"/>
</dbReference>
<dbReference type="GO" id="GO:0019003">
    <property type="term" value="F:GDP binding"/>
    <property type="evidence" value="ECO:0000250"/>
    <property type="project" value="UniProtKB"/>
</dbReference>
<dbReference type="GO" id="GO:0005525">
    <property type="term" value="F:GTP binding"/>
    <property type="evidence" value="ECO:0000250"/>
    <property type="project" value="UniProtKB"/>
</dbReference>
<dbReference type="GO" id="GO:0003924">
    <property type="term" value="F:GTPase activity"/>
    <property type="evidence" value="ECO:0000250"/>
    <property type="project" value="UniProtKB"/>
</dbReference>
<dbReference type="GO" id="GO:0000287">
    <property type="term" value="F:magnesium ion binding"/>
    <property type="evidence" value="ECO:0000250"/>
    <property type="project" value="UniProtKB"/>
</dbReference>
<dbReference type="GO" id="GO:0007188">
    <property type="term" value="P:adenylate cyclase-modulating G protein-coupled receptor signaling pathway"/>
    <property type="evidence" value="ECO:0000250"/>
    <property type="project" value="UniProtKB"/>
</dbReference>
<dbReference type="GO" id="GO:0051301">
    <property type="term" value="P:cell division"/>
    <property type="evidence" value="ECO:0000250"/>
    <property type="project" value="UniProtKB"/>
</dbReference>
<dbReference type="GO" id="GO:1904322">
    <property type="term" value="P:cellular response to forskolin"/>
    <property type="evidence" value="ECO:0000250"/>
    <property type="project" value="UniProtKB"/>
</dbReference>
<dbReference type="GO" id="GO:0007212">
    <property type="term" value="P:G protein-coupled dopamine receptor signaling pathway"/>
    <property type="evidence" value="ECO:0007669"/>
    <property type="project" value="TreeGrafter"/>
</dbReference>
<dbReference type="GO" id="GO:0007186">
    <property type="term" value="P:G protein-coupled receptor signaling pathway"/>
    <property type="evidence" value="ECO:0000250"/>
    <property type="project" value="UniProtKB"/>
</dbReference>
<dbReference type="GO" id="GO:1904778">
    <property type="term" value="P:positive regulation of protein localization to cell cortex"/>
    <property type="evidence" value="ECO:0000250"/>
    <property type="project" value="UniProtKB"/>
</dbReference>
<dbReference type="GO" id="GO:0060236">
    <property type="term" value="P:regulation of mitotic spindle organization"/>
    <property type="evidence" value="ECO:0000250"/>
    <property type="project" value="UniProtKB"/>
</dbReference>
<dbReference type="CDD" id="cd00066">
    <property type="entry name" value="G-alpha"/>
    <property type="match status" value="1"/>
</dbReference>
<dbReference type="FunFam" id="1.10.400.10:FF:000001">
    <property type="entry name" value="Guanine nucleotide-binding protein G(I) subunit alpha"/>
    <property type="match status" value="1"/>
</dbReference>
<dbReference type="FunFam" id="3.40.50.300:FF:002487">
    <property type="entry name" value="Guanine nucleotide-binding protein G(i) subunit alpha-1"/>
    <property type="match status" value="1"/>
</dbReference>
<dbReference type="FunFam" id="3.40.50.300:FF:003559">
    <property type="entry name" value="Guanine nucleotide-binding protein G(i) subunit alpha-1"/>
    <property type="match status" value="1"/>
</dbReference>
<dbReference type="Gene3D" id="1.10.400.10">
    <property type="entry name" value="GI Alpha 1, domain 2-like"/>
    <property type="match status" value="1"/>
</dbReference>
<dbReference type="Gene3D" id="3.40.50.300">
    <property type="entry name" value="P-loop containing nucleotide triphosphate hydrolases"/>
    <property type="match status" value="1"/>
</dbReference>
<dbReference type="InterPro" id="IPR001408">
    <property type="entry name" value="Gprotein_alpha_I"/>
</dbReference>
<dbReference type="InterPro" id="IPR001019">
    <property type="entry name" value="Gprotein_alpha_su"/>
</dbReference>
<dbReference type="InterPro" id="IPR011025">
    <property type="entry name" value="GproteinA_insert"/>
</dbReference>
<dbReference type="InterPro" id="IPR027417">
    <property type="entry name" value="P-loop_NTPase"/>
</dbReference>
<dbReference type="PANTHER" id="PTHR10218">
    <property type="entry name" value="GTP-BINDING PROTEIN ALPHA SUBUNIT"/>
    <property type="match status" value="1"/>
</dbReference>
<dbReference type="PANTHER" id="PTHR10218:SF230">
    <property type="entry name" value="GUANINE NUCLEOTIDE-BINDING PROTEIN G(I) SUBUNIT ALPHA-3"/>
    <property type="match status" value="1"/>
</dbReference>
<dbReference type="Pfam" id="PF00503">
    <property type="entry name" value="G-alpha"/>
    <property type="match status" value="1"/>
</dbReference>
<dbReference type="PRINTS" id="PR00318">
    <property type="entry name" value="GPROTEINA"/>
</dbReference>
<dbReference type="PRINTS" id="PR00441">
    <property type="entry name" value="GPROTEINAI"/>
</dbReference>
<dbReference type="SMART" id="SM00275">
    <property type="entry name" value="G_alpha"/>
    <property type="match status" value="1"/>
</dbReference>
<dbReference type="SUPFAM" id="SSF52540">
    <property type="entry name" value="P-loop containing nucleoside triphosphate hydrolases"/>
    <property type="match status" value="1"/>
</dbReference>
<dbReference type="SUPFAM" id="SSF47895">
    <property type="entry name" value="Transducin (alpha subunit), insertion domain"/>
    <property type="match status" value="1"/>
</dbReference>
<dbReference type="PROSITE" id="PS51882">
    <property type="entry name" value="G_ALPHA"/>
    <property type="match status" value="1"/>
</dbReference>
<evidence type="ECO:0000250" key="1">
    <source>
        <dbReference type="UniProtKB" id="P10824"/>
    </source>
</evidence>
<evidence type="ECO:0000250" key="2">
    <source>
        <dbReference type="UniProtKB" id="P63096"/>
    </source>
</evidence>
<evidence type="ECO:0000255" key="3">
    <source>
        <dbReference type="PROSITE-ProRule" id="PRU01230"/>
    </source>
</evidence>
<evidence type="ECO:0000305" key="4"/>
<organism>
    <name type="scientific">Cavia porcellus</name>
    <name type="common">Guinea pig</name>
    <dbReference type="NCBI Taxonomy" id="10141"/>
    <lineage>
        <taxon>Eukaryota</taxon>
        <taxon>Metazoa</taxon>
        <taxon>Chordata</taxon>
        <taxon>Craniata</taxon>
        <taxon>Vertebrata</taxon>
        <taxon>Euteleostomi</taxon>
        <taxon>Mammalia</taxon>
        <taxon>Eutheria</taxon>
        <taxon>Euarchontoglires</taxon>
        <taxon>Glires</taxon>
        <taxon>Rodentia</taxon>
        <taxon>Hystricomorpha</taxon>
        <taxon>Caviidae</taxon>
        <taxon>Cavia</taxon>
    </lineage>
</organism>
<gene>
    <name type="primary">GNAI1</name>
</gene>